<comment type="interaction">
    <interactant intactId="EBI-10221726">
        <id>P82987</id>
    </interactant>
    <interactant intactId="EBI-3867333">
        <id>A8MQ03</id>
        <label>CYSRT1</label>
    </interactant>
    <organismsDiffer>false</organismsDiffer>
    <experiments>3</experiments>
</comment>
<comment type="interaction">
    <interactant intactId="EBI-10221726">
        <id>P82987</id>
    </interactant>
    <interactant intactId="EBI-374781">
        <id>O76003</id>
        <label>GLRX3</label>
    </interactant>
    <organismsDiffer>false</organismsDiffer>
    <experiments>3</experiments>
</comment>
<comment type="interaction">
    <interactant intactId="EBI-10221726">
        <id>P82987</id>
    </interactant>
    <interactant intactId="EBI-10171697">
        <id>Q6A162</id>
        <label>KRT40</label>
    </interactant>
    <organismsDiffer>false</organismsDiffer>
    <experiments>3</experiments>
</comment>
<comment type="interaction">
    <interactant intactId="EBI-10221726">
        <id>P82987</id>
    </interactant>
    <interactant intactId="EBI-11959885">
        <id>Q07627</id>
        <label>KRTAP1-1</label>
    </interactant>
    <organismsDiffer>false</organismsDiffer>
    <experiments>3</experiments>
</comment>
<comment type="interaction">
    <interactant intactId="EBI-10221726">
        <id>P82987</id>
    </interactant>
    <interactant intactId="EBI-12012928">
        <id>P60371</id>
        <label>KRTAP10-6</label>
    </interactant>
    <organismsDiffer>false</organismsDiffer>
    <experiments>3</experiments>
</comment>
<comment type="interaction">
    <interactant intactId="EBI-10221726">
        <id>P82987</id>
    </interactant>
    <interactant intactId="EBI-10171774">
        <id>P60410</id>
        <label>KRTAP10-8</label>
    </interactant>
    <organismsDiffer>false</organismsDiffer>
    <experiments>6</experiments>
</comment>
<comment type="interaction">
    <interactant intactId="EBI-10221726">
        <id>P82987</id>
    </interactant>
    <interactant intactId="EBI-11953334">
        <id>P60328</id>
        <label>KRTAP12-3</label>
    </interactant>
    <organismsDiffer>false</organismsDiffer>
    <experiments>3</experiments>
</comment>
<comment type="interaction">
    <interactant intactId="EBI-10221726">
        <id>P82987</id>
    </interactant>
    <interactant intactId="EBI-10196781">
        <id>P0C7H8</id>
        <label>KRTAP2-3</label>
    </interactant>
    <organismsDiffer>false</organismsDiffer>
    <experiments>3</experiments>
</comment>
<comment type="interaction">
    <interactant intactId="EBI-10221726">
        <id>P82987</id>
    </interactant>
    <interactant intactId="EBI-14065470">
        <id>Q9BYR9</id>
        <label>KRTAP2-4</label>
    </interactant>
    <organismsDiffer>false</organismsDiffer>
    <experiments>3</experiments>
</comment>
<comment type="interaction">
    <interactant intactId="EBI-10221726">
        <id>P82987</id>
    </interactant>
    <interactant intactId="EBI-751260">
        <id>Q9BYR7</id>
        <label>KRTAP3-2</label>
    </interactant>
    <organismsDiffer>false</organismsDiffer>
    <experiments>3</experiments>
</comment>
<comment type="interaction">
    <interactant intactId="EBI-10221726">
        <id>P82987</id>
    </interactant>
    <interactant intactId="EBI-11987425">
        <id>Q6L8G8</id>
        <label>KRTAP5-7</label>
    </interactant>
    <organismsDiffer>false</organismsDiffer>
    <experiments>3</experiments>
</comment>
<comment type="interaction">
    <interactant intactId="EBI-10221726">
        <id>P82987</id>
    </interactant>
    <interactant intactId="EBI-724076">
        <id>Q99750</id>
        <label>MDFI</label>
    </interactant>
    <organismsDiffer>false</organismsDiffer>
    <experiments>6</experiments>
</comment>
<comment type="interaction">
    <interactant intactId="EBI-10221726">
        <id>P82987</id>
    </interactant>
    <interactant intactId="EBI-945833">
        <id>Q7Z3S9</id>
        <label>NOTCH2NLA</label>
    </interactant>
    <organismsDiffer>false</organismsDiffer>
    <experiments>3</experiments>
</comment>
<comment type="subcellular location">
    <subcellularLocation>
        <location evidence="6">Secreted</location>
        <location evidence="6">Extracellular space</location>
        <location evidence="6">Extracellular matrix</location>
    </subcellularLocation>
</comment>
<comment type="alternative products">
    <event type="alternative splicing"/>
    <isoform>
        <id>P82987-1</id>
        <name>1</name>
        <sequence type="displayed"/>
    </isoform>
    <isoform>
        <id>P82987-2</id>
        <name>2</name>
        <sequence type="described" ref="VSP_037810"/>
    </isoform>
</comment>
<comment type="tissue specificity">
    <text evidence="6 9">Expressed in epithelial cells of the colon, fallopian tube, skin, breast, prostate, epididymis, liver, pancreatic islets and bile ducts, as well as by vascular endothelial cells, smooth muscle cells, fibroblasts, cortical and ganglionic neurons and cardiac myocytes. Also expressed by malignant epithelial cells in colon cancer, as well as breast, prostate, renal and skin tumors. Expression is significantly reduced in colon cancer compared to normal colon.</text>
</comment>
<comment type="PTM">
    <text evidence="1">Glycosylated (By similarity). Can be O-fucosylated by POFUT2 on a serine or a threonine residue found within the consensus sequence C1-X(2)-(S/T)-C2-G of the TSP type-1 repeat domains where C1 and C2 are the first and second cysteine residue of the repeat, respectively. Fucosylated repeats can then be further glycosylated by the addition of a beta-1,3-glucose residue by the glucosyltransferase, B3GALTL. Fucosylation mediates the efficient secretion of ADAMTS family members. Can also be C-glycosylated with one or two mannose molecules on tryptophan residues within the consensus sequence W-X-X-W of the TPRs, and N-glycosylated. These other glycosylations can also facilitate secretion (By similarity).</text>
</comment>
<comment type="caution">
    <text evidence="10">Although strongly similar to members of the ADAMTS family it lacks the metalloprotease and disintegrin-like domains which are typical of that family.</text>
</comment>
<feature type="signal peptide" evidence="2">
    <location>
        <begin position="1"/>
        <end position="26"/>
    </location>
</feature>
<feature type="chain" id="PRO_0000249684" description="ADAMTS-like protein 3">
    <location>
        <begin position="27"/>
        <end position="1691"/>
    </location>
</feature>
<feature type="domain" description="TSP type-1 1" evidence="3">
    <location>
        <begin position="75"/>
        <end position="124"/>
    </location>
</feature>
<feature type="domain" description="TSP type-1 2" evidence="3">
    <location>
        <begin position="418"/>
        <end position="468"/>
    </location>
</feature>
<feature type="domain" description="TSP type-1 3" evidence="3">
    <location>
        <begin position="478"/>
        <end position="535"/>
    </location>
</feature>
<feature type="domain" description="TSP type-1 4" evidence="3">
    <location>
        <begin position="564"/>
        <end position="626"/>
    </location>
</feature>
<feature type="domain" description="TSP type-1 5" evidence="3">
    <location>
        <begin position="703"/>
        <end position="760"/>
    </location>
</feature>
<feature type="domain" description="TSP type-1 6" evidence="3">
    <location>
        <begin position="763"/>
        <end position="818"/>
    </location>
</feature>
<feature type="domain" description="TSP type-1 7" evidence="3">
    <location>
        <begin position="819"/>
        <end position="881"/>
    </location>
</feature>
<feature type="domain" description="Ig-like C2-type 1">
    <location>
        <begin position="896"/>
        <end position="992"/>
    </location>
</feature>
<feature type="domain" description="Ig-like C2-type 2">
    <location>
        <begin position="1185"/>
        <end position="1279"/>
    </location>
</feature>
<feature type="domain" description="Ig-like C2-type 3">
    <location>
        <begin position="1296"/>
        <end position="1378"/>
    </location>
</feature>
<feature type="domain" description="TSP type-1 8" evidence="3">
    <location>
        <begin position="1424"/>
        <end position="1482"/>
    </location>
</feature>
<feature type="domain" description="TSP type-1 9" evidence="3">
    <location>
        <begin position="1483"/>
        <end position="1545"/>
    </location>
</feature>
<feature type="domain" description="TSP type-1 10" evidence="3">
    <location>
        <begin position="1597"/>
        <end position="1644"/>
    </location>
</feature>
<feature type="domain" description="PLAC" evidence="4">
    <location>
        <begin position="1655"/>
        <end position="1691"/>
    </location>
</feature>
<feature type="region of interest" description="Disordered" evidence="5">
    <location>
        <begin position="1146"/>
        <end position="1184"/>
    </location>
</feature>
<feature type="compositionally biased region" description="Polar residues" evidence="5">
    <location>
        <begin position="1156"/>
        <end position="1169"/>
    </location>
</feature>
<feature type="glycosylation site" description="N-linked (GlcNAc...) asparagine" evidence="2">
    <location>
        <position position="293"/>
    </location>
</feature>
<feature type="glycosylation site" description="N-linked (GlcNAc...) asparagine" evidence="2">
    <location>
        <position position="681"/>
    </location>
</feature>
<feature type="glycosylation site" description="N-linked (GlcNAc...) asparagine" evidence="2">
    <location>
        <position position="797"/>
    </location>
</feature>
<feature type="glycosylation site" description="N-linked (GlcNAc...) asparagine" evidence="2">
    <location>
        <position position="915"/>
    </location>
</feature>
<feature type="glycosylation site" description="N-linked (GlcNAc...) asparagine" evidence="2">
    <location>
        <position position="927"/>
    </location>
</feature>
<feature type="glycosylation site" description="N-linked (GlcNAc...) asparagine" evidence="2">
    <location>
        <position position="1102"/>
    </location>
</feature>
<feature type="glycosylation site" description="N-linked (GlcNAc...) asparagine" evidence="2">
    <location>
        <position position="1191"/>
    </location>
</feature>
<feature type="glycosylation site" description="N-linked (GlcNAc...) asparagine" evidence="2">
    <location>
        <position position="1292"/>
    </location>
</feature>
<feature type="glycosylation site" description="N-linked (GlcNAc...) asparagine" evidence="2">
    <location>
        <position position="1316"/>
    </location>
</feature>
<feature type="glycosylation site" description="N-linked (GlcNAc...) asparagine" evidence="2">
    <location>
        <position position="1330"/>
    </location>
</feature>
<feature type="glycosylation site" description="N-linked (GlcNAc...) asparagine" evidence="2">
    <location>
        <position position="1343"/>
    </location>
</feature>
<feature type="glycosylation site" description="N-linked (GlcNAc...) asparagine" evidence="2">
    <location>
        <position position="1349"/>
    </location>
</feature>
<feature type="glycosylation site" description="N-linked (GlcNAc...) asparagine" evidence="2">
    <location>
        <position position="1356"/>
    </location>
</feature>
<feature type="glycosylation site" description="N-linked (GlcNAc...) asparagine" evidence="2">
    <location>
        <position position="1432"/>
    </location>
</feature>
<feature type="glycosylation site" description="N-linked (GlcNAc...) asparagine" evidence="2">
    <location>
        <position position="1516"/>
    </location>
</feature>
<feature type="glycosylation site" description="N-linked (GlcNAc...) asparagine" evidence="2">
    <location>
        <position position="1574"/>
    </location>
</feature>
<feature type="glycosylation site" description="N-linked (GlcNAc...) asparagine" evidence="2">
    <location>
        <position position="1591"/>
    </location>
</feature>
<feature type="disulfide bond" evidence="1">
    <location>
        <begin position="87"/>
        <end position="118"/>
    </location>
</feature>
<feature type="disulfide bond" evidence="1">
    <location>
        <begin position="91"/>
        <end position="123"/>
    </location>
</feature>
<feature type="disulfide bond" evidence="1">
    <location>
        <begin position="102"/>
        <end position="108"/>
    </location>
</feature>
<feature type="disulfide bond" evidence="1">
    <location>
        <begin position="576"/>
        <end position="620"/>
    </location>
</feature>
<feature type="disulfide bond" evidence="1">
    <location>
        <begin position="580"/>
        <end position="625"/>
    </location>
</feature>
<feature type="disulfide bond" evidence="1">
    <location>
        <begin position="591"/>
        <end position="609"/>
    </location>
</feature>
<feature type="disulfide bond" evidence="1">
    <location>
        <begin position="831"/>
        <end position="875"/>
    </location>
</feature>
<feature type="disulfide bond" evidence="1">
    <location>
        <begin position="835"/>
        <end position="880"/>
    </location>
</feature>
<feature type="disulfide bond" evidence="1">
    <location>
        <begin position="846"/>
        <end position="863"/>
    </location>
</feature>
<feature type="disulfide bond" evidence="1">
    <location>
        <begin position="934"/>
        <end position="982"/>
    </location>
</feature>
<feature type="disulfide bond" evidence="1">
    <location>
        <begin position="1215"/>
        <end position="1263"/>
    </location>
</feature>
<feature type="disulfide bond" evidence="1">
    <location>
        <begin position="1321"/>
        <end position="1367"/>
    </location>
</feature>
<feature type="splice variant" id="VSP_037810" description="In isoform 2." evidence="10">
    <original>RDCTDTTHYCMFVKHLNLCSLDRYKQRCCQSCQEG</original>
    <variation>STYTSQTATNKGAASHVKRDKPLEGS</variation>
    <location>
        <begin position="1657"/>
        <end position="1691"/>
    </location>
</feature>
<feature type="sequence variant" id="VAR_027478" description="In dbSNP:rs4483821." evidence="7">
    <original>H</original>
    <variation>R</variation>
    <location>
        <position position="146"/>
    </location>
</feature>
<feature type="sequence variant" id="VAR_027479" description="In dbSNP:rs4144691." evidence="6">
    <original>L</original>
    <variation>V</variation>
    <location>
        <position position="290"/>
    </location>
</feature>
<feature type="sequence variant" id="VAR_035809" description="In a colorectal cancer sample; somatic mutation; dbSNP:rs1439091253." evidence="8">
    <original>V</original>
    <variation>M</variation>
    <location>
        <position position="330"/>
    </location>
</feature>
<feature type="sequence variant" id="VAR_035810" description="In a colorectal cancer sample; somatic mutation; dbSNP:rs142860011." evidence="8">
    <original>R</original>
    <variation>H</variation>
    <location>
        <position position="587"/>
    </location>
</feature>
<feature type="sequence variant" id="VAR_027480" description="In dbSNP:rs4842838." evidence="6">
    <original>V</original>
    <variation>L</variation>
    <location>
        <position position="661"/>
    </location>
</feature>
<feature type="sequence variant" id="VAR_057365" description="In dbSNP:rs34047645.">
    <original>G</original>
    <variation>R</variation>
    <location>
        <position position="713"/>
    </location>
</feature>
<feature type="sequence variant" id="VAR_035811" description="In a colorectal cancer sample; somatic mutation; dbSNP:rs146769560." evidence="8">
    <original>R</original>
    <variation>C</variation>
    <location>
        <position position="855"/>
    </location>
</feature>
<feature type="sequence variant" id="VAR_027481" description="In dbSNP:rs2277848.">
    <original>R</original>
    <variation>H</variation>
    <location>
        <position position="855"/>
    </location>
</feature>
<feature type="sequence variant" id="VAR_027482" description="In dbSNP:rs2277849." evidence="7">
    <original>L</original>
    <variation>F</variation>
    <location>
        <position position="869"/>
    </location>
</feature>
<feature type="sequence variant" id="VAR_035812" description="In a colorectal cancer sample; somatic mutation." evidence="8">
    <original>A</original>
    <variation>E</variation>
    <location>
        <position position="1315"/>
    </location>
</feature>
<feature type="sequence variant" id="VAR_027483" description="In dbSNP:rs17158450.">
    <original>T</original>
    <variation>A</variation>
    <location>
        <position position="1370"/>
    </location>
</feature>
<feature type="sequence variant" id="VAR_027484" description="In dbSNP:rs7175910.">
    <original>M</original>
    <variation>T</variation>
    <location>
        <position position="1558"/>
    </location>
</feature>
<feature type="sequence variant" id="VAR_027485" description="In dbSNP:rs950169.">
    <original>T</original>
    <variation>I</variation>
    <location>
        <position position="1660"/>
    </location>
</feature>
<feature type="sequence variant" id="VAR_027486" description="In dbSNP:rs11857906.">
    <original>R</original>
    <variation>H</variation>
    <location>
        <position position="1679"/>
    </location>
</feature>
<feature type="sequence conflict" description="In Ref. 3; AAK15041." evidence="10" ref="3">
    <original>A</original>
    <variation>V</variation>
    <location>
        <position position="265"/>
    </location>
</feature>
<feature type="sequence conflict" description="In Ref. 2; AAI28390." evidence="10" ref="2">
    <original>S</original>
    <variation>F</variation>
    <location>
        <position position="986"/>
    </location>
</feature>
<feature type="sequence conflict" description="In Ref. 2; AAI28390." evidence="10" ref="2">
    <original>A</original>
    <variation>S</variation>
    <location>
        <position position="1526"/>
    </location>
</feature>
<sequence>MASWTSPWWVLIGMVFMHSPLPQTTAEKSPGAYFLPEFALSPQGSFLEDTTGEQFLTYRYDDQTSRNTRSDEDKDGNWDAWGDWSDCSRTCGGGASYSLRRCLTGRNCEGQNIRYKTCSNHDCPPDAEDFRAQQCSAYNDVQYQGHYYEWLPRYNDPAAPCALKCHAQGQNLVVELAPKVLDGTRCNTDSLDMCISGICQAVGCDRQLGSNAKEDNCGVCAGDGSTCRLVRGQSKSHVSPEKREENVIAVPLGSRSVRITVKGPAHLFIESKTLQGSKGEHSFNSPGVFLVENTTVEFQRGSERQTFKIPGPLMADFIFKTRYTAAKDSVVQFFFYQPISHQWRQTDFFPCTVTCGGGYQLNSAECVDIRLKRVVPDHYCHYYPENVKPKPKLKECSMDPCPSSDGFKEIMPYDHFQPLPRWEHNPWTACSVSCGGGIQRRSFVCVEESMHGEILQVEEWKCMYAPKPKVMQTCNLFDCPKWIAMEWSQCTVTCGRGLRYRVVLCINHRGEHVGGCNPQLKLHIKEECVIPIPCYKPKEKSPVEAKLPWLKQAQELEETRIATEEPTFIPEPWSACSTTCGPGVQVREVKCRVLLTFTQTETELPEEECEGPKLPTERPCLLEACDESPASRELDIPLPEDSETTYDWEYAGFTPCTATCVGGHQEAIAVCLHIQTQQTVNDSLCDMVHRPPAMSQACNTEPCPPRWHVGSWGPCSATCGVGIQTRDVYCLHPGETPAPPEECRDEKPHALQACNQFDCPPGWHIEEWQQCSRTCGGGTQNRRVTCRQLLTDGSFLNLSDELCQGPKASSHKSCARTDCPPHLAVGDWSKCSVSCGVGIQRRKQVCQRLAAKGRRIPLSEMMCRDLPGLPLVRSCQMPECSKIKSEMKTKLGEQGPQILSVQRVYIQTREEKRINLTIGSRAYLLPNTSVIIKCPVRRFQKSLIQWEKDGRCLQNSKRLGITKSGSLKIHGLAAPDIGVYRCIAGSAQETVVLKLIGTDNRLIARPALREPMREYPGMDHSEANSLGVTWHKMRQMWNNKNDLYLDDDHISNQPFLRALLGHCSNSAGSTNSWELKNKQFEAAVKQGAYSMDTAQFDELIRNMSQLMETGEVSDDLASQLIYQLVAELAKAQPTHMQWRGIQEETPPAAQLRGETGSVSQSSHAKNSGKLTFKPKGPVLMRQSQPPSISFNKTINSRIGNTVYITKRTEVINILCDLITPSEATYTWTKDGTLLQPSVKIILDGTGKIQIQNPTRKEQGIYECSVANHLGSDVESSSVLYAEAPVILSVERNITKPEHNHLSVVVGGIVEAALGANVTIRCPVKGVPQPNITWLKRGGSLSGNVSLLFNGSLLLQNVSLENEGTYVCIATNALGKAVATSVLHLLERRWPESRIVFLQGHKKYILQATNTRTNSNDPTGEPPPQEPFWEPGNWSHCSATCGHLGARIQRPQCVMANGQEVSEALCDHLQKPLAGFEPCNIRDCPARWFTSVWSQCSVSCGEGYHSRQVTCKRTKANGTVQVVSPRACAPKDRPLGRKPCFGHPCVQWEPGNRCPGRCMGRAVRMQQRHTACQHNSSDSNCDDRKRPTLRRNCTSGACDVCWHTGPWKPCTAACGRGFQSRKVDCIHTRSCKPVAKRHCVQKKKPISWRHCLGPSCDRDCTDTTHYCMFVKHLNLCSLDRYKQRCCQSCQEG</sequence>
<proteinExistence type="evidence at protein level"/>
<organism>
    <name type="scientific">Homo sapiens</name>
    <name type="common">Human</name>
    <dbReference type="NCBI Taxonomy" id="9606"/>
    <lineage>
        <taxon>Eukaryota</taxon>
        <taxon>Metazoa</taxon>
        <taxon>Chordata</taxon>
        <taxon>Craniata</taxon>
        <taxon>Vertebrata</taxon>
        <taxon>Euteleostomi</taxon>
        <taxon>Mammalia</taxon>
        <taxon>Eutheria</taxon>
        <taxon>Euarchontoglires</taxon>
        <taxon>Primates</taxon>
        <taxon>Haplorrhini</taxon>
        <taxon>Catarrhini</taxon>
        <taxon>Hominidae</taxon>
        <taxon>Homo</taxon>
    </lineage>
</organism>
<keyword id="KW-0025">Alternative splicing</keyword>
<keyword id="KW-1015">Disulfide bond</keyword>
<keyword id="KW-0272">Extracellular matrix</keyword>
<keyword id="KW-0325">Glycoprotein</keyword>
<keyword id="KW-1267">Proteomics identification</keyword>
<keyword id="KW-1185">Reference proteome</keyword>
<keyword id="KW-0677">Repeat</keyword>
<keyword id="KW-0964">Secreted</keyword>
<keyword id="KW-0732">Signal</keyword>
<dbReference type="EMBL" id="AC087738">
    <property type="status" value="NOT_ANNOTATED_CDS"/>
    <property type="molecule type" value="Genomic_DNA"/>
</dbReference>
<dbReference type="EMBL" id="AC116157">
    <property type="status" value="NOT_ANNOTATED_CDS"/>
    <property type="molecule type" value="Genomic_DNA"/>
</dbReference>
<dbReference type="EMBL" id="AC027807">
    <property type="status" value="NOT_ANNOTATED_CDS"/>
    <property type="molecule type" value="Genomic_DNA"/>
</dbReference>
<dbReference type="EMBL" id="BC128389">
    <property type="protein sequence ID" value="AAI28390.1"/>
    <property type="molecule type" value="mRNA"/>
</dbReference>
<dbReference type="EMBL" id="BC128390">
    <property type="protein sequence ID" value="AAI28391.1"/>
    <property type="molecule type" value="mRNA"/>
</dbReference>
<dbReference type="EMBL" id="AF237652">
    <property type="protein sequence ID" value="AAK15041.1"/>
    <property type="molecule type" value="mRNA"/>
</dbReference>
<dbReference type="EMBL" id="AB033059">
    <property type="protein sequence ID" value="BAA86547.1"/>
    <property type="molecule type" value="mRNA"/>
</dbReference>
<dbReference type="CCDS" id="CCDS10326.1">
    <molecule id="P82987-1"/>
</dbReference>
<dbReference type="CCDS" id="CCDS73773.1">
    <molecule id="P82987-2"/>
</dbReference>
<dbReference type="RefSeq" id="NP_001288039.1">
    <molecule id="P82987-2"/>
    <property type="nucleotide sequence ID" value="NM_001301110.2"/>
</dbReference>
<dbReference type="RefSeq" id="NP_997400.2">
    <molecule id="P82987-1"/>
    <property type="nucleotide sequence ID" value="NM_207517.3"/>
</dbReference>
<dbReference type="RefSeq" id="XP_047288841.1">
    <molecule id="P82987-2"/>
    <property type="nucleotide sequence ID" value="XM_047432885.1"/>
</dbReference>
<dbReference type="RefSeq" id="XP_054189137.1">
    <molecule id="P82987-2"/>
    <property type="nucleotide sequence ID" value="XM_054333162.1"/>
</dbReference>
<dbReference type="BioGRID" id="121437">
    <property type="interactions" value="14"/>
</dbReference>
<dbReference type="FunCoup" id="P82987">
    <property type="interactions" value="261"/>
</dbReference>
<dbReference type="IntAct" id="P82987">
    <property type="interactions" value="13"/>
</dbReference>
<dbReference type="STRING" id="9606.ENSP00000286744"/>
<dbReference type="GlyCosmos" id="P82987">
    <property type="glycosylation" value="20 sites, 2 glycans"/>
</dbReference>
<dbReference type="GlyGen" id="P82987">
    <property type="glycosylation" value="20 sites, 2 N-linked glycans (2 sites), 2 O-linked glycans (3 sites)"/>
</dbReference>
<dbReference type="iPTMnet" id="P82987"/>
<dbReference type="PhosphoSitePlus" id="P82987"/>
<dbReference type="BioMuta" id="ADAMTSL3"/>
<dbReference type="DMDM" id="308153648"/>
<dbReference type="MassIVE" id="P82987"/>
<dbReference type="PaxDb" id="9606-ENSP00000286744"/>
<dbReference type="PeptideAtlas" id="P82987"/>
<dbReference type="ProteomicsDB" id="57728">
    <molecule id="P82987-1"/>
</dbReference>
<dbReference type="ProteomicsDB" id="57729">
    <molecule id="P82987-2"/>
</dbReference>
<dbReference type="Antibodypedia" id="28207">
    <property type="antibodies" value="49 antibodies from 11 providers"/>
</dbReference>
<dbReference type="DNASU" id="57188"/>
<dbReference type="Ensembl" id="ENST00000286744.10">
    <molecule id="P82987-1"/>
    <property type="protein sequence ID" value="ENSP00000286744.5"/>
    <property type="gene ID" value="ENSG00000156218.13"/>
</dbReference>
<dbReference type="Ensembl" id="ENST00000567476.1">
    <molecule id="P82987-2"/>
    <property type="protein sequence ID" value="ENSP00000456313.1"/>
    <property type="gene ID" value="ENSG00000156218.13"/>
</dbReference>
<dbReference type="Ensembl" id="ENST00000708164.1">
    <molecule id="P82987-1"/>
    <property type="protein sequence ID" value="ENSP00000517111.1"/>
    <property type="gene ID" value="ENSG00000291606.1"/>
</dbReference>
<dbReference type="Ensembl" id="ENST00000708165.1">
    <molecule id="P82987-2"/>
    <property type="protein sequence ID" value="ENSP00000517112.1"/>
    <property type="gene ID" value="ENSG00000291606.1"/>
</dbReference>
<dbReference type="GeneID" id="57188"/>
<dbReference type="KEGG" id="hsa:57188"/>
<dbReference type="MANE-Select" id="ENST00000286744.10">
    <property type="protein sequence ID" value="ENSP00000286744.5"/>
    <property type="RefSeq nucleotide sequence ID" value="NM_207517.3"/>
    <property type="RefSeq protein sequence ID" value="NP_997400.2"/>
</dbReference>
<dbReference type="UCSC" id="uc002bjz.5">
    <molecule id="P82987-1"/>
    <property type="organism name" value="human"/>
</dbReference>
<dbReference type="AGR" id="HGNC:14633"/>
<dbReference type="CTD" id="57188"/>
<dbReference type="DisGeNET" id="57188"/>
<dbReference type="GeneCards" id="ADAMTSL3"/>
<dbReference type="HGNC" id="HGNC:14633">
    <property type="gene designation" value="ADAMTSL3"/>
</dbReference>
<dbReference type="HPA" id="ENSG00000156218">
    <property type="expression patterns" value="Low tissue specificity"/>
</dbReference>
<dbReference type="MIM" id="609199">
    <property type="type" value="gene"/>
</dbReference>
<dbReference type="neXtProt" id="NX_P82987"/>
<dbReference type="OpenTargets" id="ENSG00000156218"/>
<dbReference type="PharmGKB" id="PA134934525"/>
<dbReference type="VEuPathDB" id="HostDB:ENSG00000156218"/>
<dbReference type="eggNOG" id="KOG3538">
    <property type="taxonomic scope" value="Eukaryota"/>
</dbReference>
<dbReference type="GeneTree" id="ENSGT00940000158143"/>
<dbReference type="HOGENOM" id="CLU_001717_1_0_1"/>
<dbReference type="InParanoid" id="P82987"/>
<dbReference type="OMA" id="PCGQWVV"/>
<dbReference type="OrthoDB" id="5948003at2759"/>
<dbReference type="PAN-GO" id="P82987">
    <property type="GO annotations" value="2 GO annotations based on evolutionary models"/>
</dbReference>
<dbReference type="PhylomeDB" id="P82987"/>
<dbReference type="TreeFam" id="TF351125"/>
<dbReference type="PathwayCommons" id="P82987"/>
<dbReference type="Reactome" id="R-HSA-5083635">
    <property type="pathway name" value="Defective B3GALTL causes PpS"/>
</dbReference>
<dbReference type="Reactome" id="R-HSA-5173214">
    <property type="pathway name" value="O-glycosylation of TSR domain-containing proteins"/>
</dbReference>
<dbReference type="SignaLink" id="P82987"/>
<dbReference type="BioGRID-ORCS" id="57188">
    <property type="hits" value="11 hits in 1145 CRISPR screens"/>
</dbReference>
<dbReference type="ChiTaRS" id="ADAMTSL3">
    <property type="organism name" value="human"/>
</dbReference>
<dbReference type="GenomeRNAi" id="57188"/>
<dbReference type="Pharos" id="P82987">
    <property type="development level" value="Tbio"/>
</dbReference>
<dbReference type="PRO" id="PR:P82987"/>
<dbReference type="Proteomes" id="UP000005640">
    <property type="component" value="Chromosome 15"/>
</dbReference>
<dbReference type="RNAct" id="P82987">
    <property type="molecule type" value="protein"/>
</dbReference>
<dbReference type="Bgee" id="ENSG00000156218">
    <property type="expression patterns" value="Expressed in calcaneal tendon and 153 other cell types or tissues"/>
</dbReference>
<dbReference type="GO" id="GO:0031012">
    <property type="term" value="C:extracellular matrix"/>
    <property type="evidence" value="ECO:0000318"/>
    <property type="project" value="GO_Central"/>
</dbReference>
<dbReference type="GO" id="GO:0005576">
    <property type="term" value="C:extracellular region"/>
    <property type="evidence" value="ECO:0007669"/>
    <property type="project" value="UniProtKB-KW"/>
</dbReference>
<dbReference type="GO" id="GO:0043231">
    <property type="term" value="C:intracellular membrane-bounded organelle"/>
    <property type="evidence" value="ECO:0000314"/>
    <property type="project" value="HPA"/>
</dbReference>
<dbReference type="GO" id="GO:0030198">
    <property type="term" value="P:extracellular matrix organization"/>
    <property type="evidence" value="ECO:0007669"/>
    <property type="project" value="InterPro"/>
</dbReference>
<dbReference type="CDD" id="cd00096">
    <property type="entry name" value="Ig"/>
    <property type="match status" value="1"/>
</dbReference>
<dbReference type="FunFam" id="2.20.100.10:FF:000011">
    <property type="entry name" value="A disintegrin and metalloproteinase with thrombospondin motifs 3"/>
    <property type="match status" value="1"/>
</dbReference>
<dbReference type="FunFam" id="2.20.100.10:FF:000005">
    <property type="entry name" value="ADAM metallopeptidase with thrombospondin type 1 motif 9"/>
    <property type="match status" value="1"/>
</dbReference>
<dbReference type="FunFam" id="2.20.100.10:FF:000025">
    <property type="entry name" value="ADAMTS like 1"/>
    <property type="match status" value="1"/>
</dbReference>
<dbReference type="FunFam" id="2.60.120.830:FF:000002">
    <property type="entry name" value="ADAMTS like 1"/>
    <property type="match status" value="1"/>
</dbReference>
<dbReference type="FunFam" id="2.20.100.10:FF:000086">
    <property type="entry name" value="ADAMTS like 3"/>
    <property type="match status" value="1"/>
</dbReference>
<dbReference type="FunFam" id="2.60.40.10:FF:001250">
    <property type="entry name" value="ADAMTS like 3"/>
    <property type="match status" value="1"/>
</dbReference>
<dbReference type="FunFam" id="2.60.40.10:FF:001484">
    <property type="entry name" value="ADAMTS like 3"/>
    <property type="match status" value="1"/>
</dbReference>
<dbReference type="FunFam" id="2.60.40.10:FF:000487">
    <property type="entry name" value="ADAMTS-like 3 isoform 1"/>
    <property type="match status" value="1"/>
</dbReference>
<dbReference type="FunFam" id="2.20.100.10:FF:000076">
    <property type="entry name" value="ADAMTS-like protein 3"/>
    <property type="match status" value="1"/>
</dbReference>
<dbReference type="FunFam" id="2.20.100.10:FF:000009">
    <property type="entry name" value="ADAMTS-like protein 3 isoform A"/>
    <property type="match status" value="2"/>
</dbReference>
<dbReference type="Gene3D" id="2.60.120.830">
    <property type="match status" value="1"/>
</dbReference>
<dbReference type="Gene3D" id="2.60.40.10">
    <property type="entry name" value="Immunoglobulins"/>
    <property type="match status" value="3"/>
</dbReference>
<dbReference type="Gene3D" id="2.20.100.10">
    <property type="entry name" value="Thrombospondin type-1 (TSP1) repeat"/>
    <property type="match status" value="12"/>
</dbReference>
<dbReference type="InterPro" id="IPR013273">
    <property type="entry name" value="ADAMTS/ADAMTS-like"/>
</dbReference>
<dbReference type="InterPro" id="IPR050439">
    <property type="entry name" value="ADAMTS_ADAMTS-like"/>
</dbReference>
<dbReference type="InterPro" id="IPR045371">
    <property type="entry name" value="ADAMTS_CR_3"/>
</dbReference>
<dbReference type="InterPro" id="IPR007110">
    <property type="entry name" value="Ig-like_dom"/>
</dbReference>
<dbReference type="InterPro" id="IPR036179">
    <property type="entry name" value="Ig-like_dom_sf"/>
</dbReference>
<dbReference type="InterPro" id="IPR013783">
    <property type="entry name" value="Ig-like_fold"/>
</dbReference>
<dbReference type="InterPro" id="IPR013098">
    <property type="entry name" value="Ig_I-set"/>
</dbReference>
<dbReference type="InterPro" id="IPR003599">
    <property type="entry name" value="Ig_sub"/>
</dbReference>
<dbReference type="InterPro" id="IPR003598">
    <property type="entry name" value="Ig_sub2"/>
</dbReference>
<dbReference type="InterPro" id="IPR010909">
    <property type="entry name" value="PLAC"/>
</dbReference>
<dbReference type="InterPro" id="IPR000884">
    <property type="entry name" value="TSP1_rpt"/>
</dbReference>
<dbReference type="InterPro" id="IPR036383">
    <property type="entry name" value="TSP1_rpt_sf"/>
</dbReference>
<dbReference type="PANTHER" id="PTHR13723">
    <property type="entry name" value="ADAMTS A DISINTEGRIN AND METALLOPROTEASE WITH THROMBOSPONDIN MOTIFS PROTEASE"/>
    <property type="match status" value="1"/>
</dbReference>
<dbReference type="PANTHER" id="PTHR13723:SF169">
    <property type="entry name" value="ADAMTS-LIKE PROTEIN 3"/>
    <property type="match status" value="1"/>
</dbReference>
<dbReference type="Pfam" id="PF19236">
    <property type="entry name" value="ADAMTS_CR_3"/>
    <property type="match status" value="1"/>
</dbReference>
<dbReference type="Pfam" id="PF07679">
    <property type="entry name" value="I-set"/>
    <property type="match status" value="3"/>
</dbReference>
<dbReference type="Pfam" id="PF08686">
    <property type="entry name" value="PLAC"/>
    <property type="match status" value="1"/>
</dbReference>
<dbReference type="Pfam" id="PF19030">
    <property type="entry name" value="TSP1_ADAMTS"/>
    <property type="match status" value="11"/>
</dbReference>
<dbReference type="Pfam" id="PF00090">
    <property type="entry name" value="TSP_1"/>
    <property type="match status" value="1"/>
</dbReference>
<dbReference type="PRINTS" id="PR01857">
    <property type="entry name" value="ADAMTSFAMILY"/>
</dbReference>
<dbReference type="SMART" id="SM00409">
    <property type="entry name" value="IG"/>
    <property type="match status" value="3"/>
</dbReference>
<dbReference type="SMART" id="SM00408">
    <property type="entry name" value="IGc2"/>
    <property type="match status" value="3"/>
</dbReference>
<dbReference type="SMART" id="SM00209">
    <property type="entry name" value="TSP1"/>
    <property type="match status" value="12"/>
</dbReference>
<dbReference type="SUPFAM" id="SSF48726">
    <property type="entry name" value="Immunoglobulin"/>
    <property type="match status" value="3"/>
</dbReference>
<dbReference type="SUPFAM" id="SSF82895">
    <property type="entry name" value="TSP-1 type 1 repeat"/>
    <property type="match status" value="12"/>
</dbReference>
<dbReference type="PROSITE" id="PS50835">
    <property type="entry name" value="IG_LIKE"/>
    <property type="match status" value="3"/>
</dbReference>
<dbReference type="PROSITE" id="PS50900">
    <property type="entry name" value="PLAC"/>
    <property type="match status" value="1"/>
</dbReference>
<dbReference type="PROSITE" id="PS50092">
    <property type="entry name" value="TSP1"/>
    <property type="match status" value="10"/>
</dbReference>
<reference key="1">
    <citation type="journal article" date="2003" name="Nature">
        <title>The DNA sequence and analysis of human chromosome 14.</title>
        <authorList>
            <person name="Heilig R."/>
            <person name="Eckenberg R."/>
            <person name="Petit J.-L."/>
            <person name="Fonknechten N."/>
            <person name="Da Silva C."/>
            <person name="Cattolico L."/>
            <person name="Levy M."/>
            <person name="Barbe V."/>
            <person name="De Berardinis V."/>
            <person name="Ureta-Vidal A."/>
            <person name="Pelletier E."/>
            <person name="Vico V."/>
            <person name="Anthouard V."/>
            <person name="Rowen L."/>
            <person name="Madan A."/>
            <person name="Qin S."/>
            <person name="Sun H."/>
            <person name="Du H."/>
            <person name="Pepin K."/>
            <person name="Artiguenave F."/>
            <person name="Robert C."/>
            <person name="Cruaud C."/>
            <person name="Bruels T."/>
            <person name="Jaillon O."/>
            <person name="Friedlander L."/>
            <person name="Samson G."/>
            <person name="Brottier P."/>
            <person name="Cure S."/>
            <person name="Segurens B."/>
            <person name="Aniere F."/>
            <person name="Samain S."/>
            <person name="Crespeau H."/>
            <person name="Abbasi N."/>
            <person name="Aiach N."/>
            <person name="Boscus D."/>
            <person name="Dickhoff R."/>
            <person name="Dors M."/>
            <person name="Dubois I."/>
            <person name="Friedman C."/>
            <person name="Gouyvenoux M."/>
            <person name="James R."/>
            <person name="Madan A."/>
            <person name="Mairey-Estrada B."/>
            <person name="Mangenot S."/>
            <person name="Martins N."/>
            <person name="Menard M."/>
            <person name="Oztas S."/>
            <person name="Ratcliffe A."/>
            <person name="Shaffer T."/>
            <person name="Trask B."/>
            <person name="Vacherie B."/>
            <person name="Bellemere C."/>
            <person name="Belser C."/>
            <person name="Besnard-Gonnet M."/>
            <person name="Bartol-Mavel D."/>
            <person name="Boutard M."/>
            <person name="Briez-Silla S."/>
            <person name="Combette S."/>
            <person name="Dufosse-Laurent V."/>
            <person name="Ferron C."/>
            <person name="Lechaplais C."/>
            <person name="Louesse C."/>
            <person name="Muselet D."/>
            <person name="Magdelenat G."/>
            <person name="Pateau E."/>
            <person name="Petit E."/>
            <person name="Sirvain-Trukniewicz P."/>
            <person name="Trybou A."/>
            <person name="Vega-Czarny N."/>
            <person name="Bataille E."/>
            <person name="Bluet E."/>
            <person name="Bordelais I."/>
            <person name="Dubois M."/>
            <person name="Dumont C."/>
            <person name="Guerin T."/>
            <person name="Haffray S."/>
            <person name="Hammadi R."/>
            <person name="Muanga J."/>
            <person name="Pellouin V."/>
            <person name="Robert D."/>
            <person name="Wunderle E."/>
            <person name="Gauguet G."/>
            <person name="Roy A."/>
            <person name="Sainte-Marthe L."/>
            <person name="Verdier J."/>
            <person name="Verdier-Discala C."/>
            <person name="Hillier L.W."/>
            <person name="Fulton L."/>
            <person name="McPherson J."/>
            <person name="Matsuda F."/>
            <person name="Wilson R."/>
            <person name="Scarpelli C."/>
            <person name="Gyapay G."/>
            <person name="Wincker P."/>
            <person name="Saurin W."/>
            <person name="Quetier F."/>
            <person name="Waterston R."/>
            <person name="Hood L."/>
            <person name="Weissenbach J."/>
        </authorList>
    </citation>
    <scope>NUCLEOTIDE SEQUENCE [LARGE SCALE GENOMIC DNA]</scope>
</reference>
<reference key="2">
    <citation type="journal article" date="2004" name="Genome Res.">
        <title>The status, quality, and expansion of the NIH full-length cDNA project: the Mammalian Gene Collection (MGC).</title>
        <authorList>
            <consortium name="The MGC Project Team"/>
        </authorList>
    </citation>
    <scope>NUCLEOTIDE SEQUENCE [LARGE SCALE MRNA]</scope>
    <scope>VARIANTS ARG-146 AND PHE-869</scope>
</reference>
<reference key="3">
    <citation type="journal article" date="2003" name="Matrix Biol.">
        <title>ADAMTSL-3/punctin-2, a novel glycoprotein in extracellular matrix related to the ADAMTS family of metalloproteases.</title>
        <authorList>
            <person name="Hall N.G."/>
            <person name="Klenotic P."/>
            <person name="Anand-Apte B."/>
            <person name="Apte S.S."/>
        </authorList>
    </citation>
    <scope>NUCLEOTIDE SEQUENCE [MRNA] OF 1-766</scope>
    <scope>SUBCELLULAR LOCATION</scope>
    <scope>TISSUE SPECIFICITY</scope>
    <scope>VARIANTS VAL-290 AND LEU-661</scope>
</reference>
<reference key="4">
    <citation type="journal article" date="1999" name="DNA Res.">
        <title>Prediction of the coding sequences of unidentified human genes. XV. The complete sequences of 100 new cDNA clones from brain which code for large proteins in vitro.</title>
        <authorList>
            <person name="Nagase T."/>
            <person name="Ishikawa K."/>
            <person name="Kikuno R."/>
            <person name="Hirosawa M."/>
            <person name="Nomura N."/>
            <person name="Ohara O."/>
        </authorList>
    </citation>
    <scope>NUCLEOTIDE SEQUENCE [LARGE SCALE MRNA] OF 669-1691</scope>
    <source>
        <tissue>Brain</tissue>
    </source>
</reference>
<reference key="5">
    <citation type="journal article" date="2007" name="Int. J. Cancer">
        <title>ADAMTSL3/punctin-2, a gene frequently mutated in colorectal tumors, is widely expressed in normal and malignant epithelial cells, vascular endothelial cells and other cell types, and its mRNA is reduced in colon cancer.</title>
        <authorList>
            <person name="Koo B.H."/>
            <person name="Hurskainen T."/>
            <person name="Mielke K."/>
            <person name="Aung P.P."/>
            <person name="Casey G."/>
            <person name="Autio-Harmainen H."/>
            <person name="Apte S.S."/>
        </authorList>
    </citation>
    <scope>TISSUE SPECIFICITY</scope>
</reference>
<reference key="6">
    <citation type="journal article" date="2006" name="Science">
        <title>The consensus coding sequences of human breast and colorectal cancers.</title>
        <authorList>
            <person name="Sjoeblom T."/>
            <person name="Jones S."/>
            <person name="Wood L.D."/>
            <person name="Parsons D.W."/>
            <person name="Lin J."/>
            <person name="Barber T.D."/>
            <person name="Mandelker D."/>
            <person name="Leary R.J."/>
            <person name="Ptak J."/>
            <person name="Silliman N."/>
            <person name="Szabo S."/>
            <person name="Buckhaults P."/>
            <person name="Farrell C."/>
            <person name="Meeh P."/>
            <person name="Markowitz S.D."/>
            <person name="Willis J."/>
            <person name="Dawson D."/>
            <person name="Willson J.K.V."/>
            <person name="Gazdar A.F."/>
            <person name="Hartigan J."/>
            <person name="Wu L."/>
            <person name="Liu C."/>
            <person name="Parmigiani G."/>
            <person name="Park B.H."/>
            <person name="Bachman K.E."/>
            <person name="Papadopoulos N."/>
            <person name="Vogelstein B."/>
            <person name="Kinzler K.W."/>
            <person name="Velculescu V.E."/>
        </authorList>
    </citation>
    <scope>VARIANTS [LARGE SCALE ANALYSIS] MET-330; HIS-587; CYS-855 AND GLU-1315</scope>
</reference>
<gene>
    <name type="primary">ADAMTSL3</name>
    <name type="synonym">KIAA1233</name>
</gene>
<evidence type="ECO:0000250" key="1"/>
<evidence type="ECO:0000255" key="2"/>
<evidence type="ECO:0000255" key="3">
    <source>
        <dbReference type="PROSITE-ProRule" id="PRU00210"/>
    </source>
</evidence>
<evidence type="ECO:0000255" key="4">
    <source>
        <dbReference type="PROSITE-ProRule" id="PRU00233"/>
    </source>
</evidence>
<evidence type="ECO:0000256" key="5">
    <source>
        <dbReference type="SAM" id="MobiDB-lite"/>
    </source>
</evidence>
<evidence type="ECO:0000269" key="6">
    <source>
    </source>
</evidence>
<evidence type="ECO:0000269" key="7">
    <source>
    </source>
</evidence>
<evidence type="ECO:0000269" key="8">
    <source>
    </source>
</evidence>
<evidence type="ECO:0000269" key="9">
    <source>
    </source>
</evidence>
<evidence type="ECO:0000305" key="10"/>
<name>ATL3_HUMAN</name>
<protein>
    <recommendedName>
        <fullName>ADAMTS-like protein 3</fullName>
        <shortName>ADAMTSL-3</shortName>
    </recommendedName>
    <alternativeName>
        <fullName>Punctin-2</fullName>
    </alternativeName>
</protein>
<accession>P82987</accession>
<accession>A1A566</accession>
<accession>A1A567</accession>
<accession>Q9ULI7</accession>